<keyword id="KW-0143">Chaperone</keyword>
<keyword id="KW-0963">Cytoplasm</keyword>
<dbReference type="EMBL" id="CP000026">
    <property type="protein sequence ID" value="AAV79887.1"/>
    <property type="molecule type" value="Genomic_DNA"/>
</dbReference>
<dbReference type="RefSeq" id="WP_000027827.1">
    <property type="nucleotide sequence ID" value="NC_006511.1"/>
</dbReference>
<dbReference type="SMR" id="Q5PL63"/>
<dbReference type="KEGG" id="spt:SPA4146"/>
<dbReference type="HOGENOM" id="CLU_132825_1_1_6"/>
<dbReference type="Proteomes" id="UP000008185">
    <property type="component" value="Chromosome"/>
</dbReference>
<dbReference type="GO" id="GO:0005737">
    <property type="term" value="C:cytoplasm"/>
    <property type="evidence" value="ECO:0007669"/>
    <property type="project" value="UniProtKB-SubCell"/>
</dbReference>
<dbReference type="GO" id="GO:0005524">
    <property type="term" value="F:ATP binding"/>
    <property type="evidence" value="ECO:0007669"/>
    <property type="project" value="InterPro"/>
</dbReference>
<dbReference type="GO" id="GO:0046872">
    <property type="term" value="F:metal ion binding"/>
    <property type="evidence" value="ECO:0007669"/>
    <property type="project" value="TreeGrafter"/>
</dbReference>
<dbReference type="GO" id="GO:0044183">
    <property type="term" value="F:protein folding chaperone"/>
    <property type="evidence" value="ECO:0007669"/>
    <property type="project" value="InterPro"/>
</dbReference>
<dbReference type="GO" id="GO:0051087">
    <property type="term" value="F:protein-folding chaperone binding"/>
    <property type="evidence" value="ECO:0007669"/>
    <property type="project" value="TreeGrafter"/>
</dbReference>
<dbReference type="GO" id="GO:0051082">
    <property type="term" value="F:unfolded protein binding"/>
    <property type="evidence" value="ECO:0007669"/>
    <property type="project" value="TreeGrafter"/>
</dbReference>
<dbReference type="GO" id="GO:0051085">
    <property type="term" value="P:chaperone cofactor-dependent protein refolding"/>
    <property type="evidence" value="ECO:0007669"/>
    <property type="project" value="TreeGrafter"/>
</dbReference>
<dbReference type="CDD" id="cd00320">
    <property type="entry name" value="cpn10"/>
    <property type="match status" value="1"/>
</dbReference>
<dbReference type="FunFam" id="2.30.33.40:FF:000001">
    <property type="entry name" value="10 kDa chaperonin"/>
    <property type="match status" value="1"/>
</dbReference>
<dbReference type="Gene3D" id="2.30.33.40">
    <property type="entry name" value="GroES chaperonin"/>
    <property type="match status" value="1"/>
</dbReference>
<dbReference type="HAMAP" id="MF_00580">
    <property type="entry name" value="CH10"/>
    <property type="match status" value="1"/>
</dbReference>
<dbReference type="InterPro" id="IPR020818">
    <property type="entry name" value="Chaperonin_GroES"/>
</dbReference>
<dbReference type="InterPro" id="IPR037124">
    <property type="entry name" value="Chaperonin_GroES_sf"/>
</dbReference>
<dbReference type="InterPro" id="IPR018369">
    <property type="entry name" value="Chaprnonin_Cpn10_CS"/>
</dbReference>
<dbReference type="InterPro" id="IPR011032">
    <property type="entry name" value="GroES-like_sf"/>
</dbReference>
<dbReference type="NCBIfam" id="NF001526">
    <property type="entry name" value="PRK00364.1-1"/>
    <property type="match status" value="1"/>
</dbReference>
<dbReference type="NCBIfam" id="NF001527">
    <property type="entry name" value="PRK00364.1-2"/>
    <property type="match status" value="1"/>
</dbReference>
<dbReference type="NCBIfam" id="NF001531">
    <property type="entry name" value="PRK00364.2-2"/>
    <property type="match status" value="1"/>
</dbReference>
<dbReference type="PANTHER" id="PTHR10772">
    <property type="entry name" value="10 KDA HEAT SHOCK PROTEIN"/>
    <property type="match status" value="1"/>
</dbReference>
<dbReference type="PANTHER" id="PTHR10772:SF58">
    <property type="entry name" value="CO-CHAPERONIN GROES"/>
    <property type="match status" value="1"/>
</dbReference>
<dbReference type="Pfam" id="PF00166">
    <property type="entry name" value="Cpn10"/>
    <property type="match status" value="1"/>
</dbReference>
<dbReference type="PRINTS" id="PR00297">
    <property type="entry name" value="CHAPERONIN10"/>
</dbReference>
<dbReference type="SMART" id="SM00883">
    <property type="entry name" value="Cpn10"/>
    <property type="match status" value="1"/>
</dbReference>
<dbReference type="SUPFAM" id="SSF50129">
    <property type="entry name" value="GroES-like"/>
    <property type="match status" value="1"/>
</dbReference>
<dbReference type="PROSITE" id="PS00681">
    <property type="entry name" value="CHAPERONINS_CPN10"/>
    <property type="match status" value="1"/>
</dbReference>
<sequence>MSIRPLHDRVIVKRKEVESKSAGGIVLTGSAAGKSTRGEIIAVGKGRILDNGTVQPLDVKVGDIVIFNDGYGVKSEKIDNEEVLIMSESDILAIVEA</sequence>
<reference key="1">
    <citation type="journal article" date="2004" name="Nat. Genet.">
        <title>Comparison of genome degradation in Paratyphi A and Typhi, human-restricted serovars of Salmonella enterica that cause typhoid.</title>
        <authorList>
            <person name="McClelland M."/>
            <person name="Sanderson K.E."/>
            <person name="Clifton S.W."/>
            <person name="Latreille P."/>
            <person name="Porwollik S."/>
            <person name="Sabo A."/>
            <person name="Meyer R."/>
            <person name="Bieri T."/>
            <person name="Ozersky P."/>
            <person name="McLellan M."/>
            <person name="Harkins C.R."/>
            <person name="Wang C."/>
            <person name="Nguyen C."/>
            <person name="Berghoff A."/>
            <person name="Elliott G."/>
            <person name="Kohlberg S."/>
            <person name="Strong C."/>
            <person name="Du F."/>
            <person name="Carter J."/>
            <person name="Kremizki C."/>
            <person name="Layman D."/>
            <person name="Leonard S."/>
            <person name="Sun H."/>
            <person name="Fulton L."/>
            <person name="Nash W."/>
            <person name="Miner T."/>
            <person name="Minx P."/>
            <person name="Delehaunty K."/>
            <person name="Fronick C."/>
            <person name="Magrini V."/>
            <person name="Nhan M."/>
            <person name="Warren W."/>
            <person name="Florea L."/>
            <person name="Spieth J."/>
            <person name="Wilson R.K."/>
        </authorList>
    </citation>
    <scope>NUCLEOTIDE SEQUENCE [LARGE SCALE GENOMIC DNA]</scope>
    <source>
        <strain>ATCC 9150 / SARB42</strain>
    </source>
</reference>
<organism>
    <name type="scientific">Salmonella paratyphi A (strain ATCC 9150 / SARB42)</name>
    <dbReference type="NCBI Taxonomy" id="295319"/>
    <lineage>
        <taxon>Bacteria</taxon>
        <taxon>Pseudomonadati</taxon>
        <taxon>Pseudomonadota</taxon>
        <taxon>Gammaproteobacteria</taxon>
        <taxon>Enterobacterales</taxon>
        <taxon>Enterobacteriaceae</taxon>
        <taxon>Salmonella</taxon>
    </lineage>
</organism>
<name>CH10_SALPA</name>
<evidence type="ECO:0000255" key="1">
    <source>
        <dbReference type="HAMAP-Rule" id="MF_00580"/>
    </source>
</evidence>
<feature type="chain" id="PRO_0000174834" description="Co-chaperonin GroES">
    <location>
        <begin position="1"/>
        <end position="97"/>
    </location>
</feature>
<comment type="function">
    <text evidence="1">Together with the chaperonin GroEL, plays an essential role in assisting protein folding. The GroEL-GroES system forms a nano-cage that allows encapsulation of the non-native substrate proteins and provides a physical environment optimized to promote and accelerate protein folding. GroES binds to the apical surface of the GroEL ring, thereby capping the opening of the GroEL channel.</text>
</comment>
<comment type="subunit">
    <text evidence="1">Heptamer of 7 subunits arranged in a ring. Interacts with the chaperonin GroEL.</text>
</comment>
<comment type="subcellular location">
    <subcellularLocation>
        <location evidence="1">Cytoplasm</location>
    </subcellularLocation>
</comment>
<comment type="similarity">
    <text evidence="1">Belongs to the GroES chaperonin family.</text>
</comment>
<proteinExistence type="inferred from homology"/>
<gene>
    <name evidence="1" type="primary">groES</name>
    <name evidence="1" type="synonym">groS</name>
    <name type="ordered locus">SPA4146</name>
</gene>
<protein>
    <recommendedName>
        <fullName evidence="1">Co-chaperonin GroES</fullName>
    </recommendedName>
    <alternativeName>
        <fullName evidence="1">10 kDa chaperonin</fullName>
    </alternativeName>
    <alternativeName>
        <fullName evidence="1">Chaperonin-10</fullName>
        <shortName evidence="1">Cpn10</shortName>
    </alternativeName>
</protein>
<accession>Q5PL63</accession>